<sequence length="144" mass="15270">MAKKKIEAIIKLQVAAGKANPSPPIGPALGQHGVNIMGFCKEFNAKTQGMEPGMPIPVEISVYSDRSFTFEMKTPPASYLIKKAINVKSGSSKPSKEFIGTITRAQLEEIAKVKDPDLTAADLDAAVRIIAGSARSMGVKVEGV</sequence>
<accession>Q0BKC0</accession>
<reference key="1">
    <citation type="journal article" date="2006" name="J. Bacteriol.">
        <title>Chromosome rearrangement and diversification of Francisella tularensis revealed by the type B (OSU18) genome sequence.</title>
        <authorList>
            <person name="Petrosino J.F."/>
            <person name="Xiang Q."/>
            <person name="Karpathy S.E."/>
            <person name="Jiang H."/>
            <person name="Yerrapragada S."/>
            <person name="Liu Y."/>
            <person name="Gioia J."/>
            <person name="Hemphill L."/>
            <person name="Gonzalez A."/>
            <person name="Raghavan T.M."/>
            <person name="Uzman A."/>
            <person name="Fox G.E."/>
            <person name="Highlander S."/>
            <person name="Reichard M."/>
            <person name="Morton R.J."/>
            <person name="Clinkenbeard K.D."/>
            <person name="Weinstock G.M."/>
        </authorList>
    </citation>
    <scope>NUCLEOTIDE SEQUENCE [LARGE SCALE GENOMIC DNA]</scope>
    <source>
        <strain>OSU18</strain>
    </source>
</reference>
<comment type="function">
    <text evidence="1">Forms part of the ribosomal stalk which helps the ribosome interact with GTP-bound translation factors.</text>
</comment>
<comment type="subunit">
    <text evidence="1">Part of the ribosomal stalk of the 50S ribosomal subunit. Interacts with L10 and the large rRNA to form the base of the stalk. L10 forms an elongated spine to which L12 dimers bind in a sequential fashion forming a multimeric L10(L12)X complex.</text>
</comment>
<comment type="PTM">
    <text evidence="1">One or more lysine residues are methylated.</text>
</comment>
<comment type="similarity">
    <text evidence="1">Belongs to the universal ribosomal protein uL11 family.</text>
</comment>
<organism>
    <name type="scientific">Francisella tularensis subsp. holarctica (strain OSU18)</name>
    <dbReference type="NCBI Taxonomy" id="393011"/>
    <lineage>
        <taxon>Bacteria</taxon>
        <taxon>Pseudomonadati</taxon>
        <taxon>Pseudomonadota</taxon>
        <taxon>Gammaproteobacteria</taxon>
        <taxon>Thiotrichales</taxon>
        <taxon>Francisellaceae</taxon>
        <taxon>Francisella</taxon>
    </lineage>
</organism>
<dbReference type="EMBL" id="CP000437">
    <property type="protein sequence ID" value="ABI83464.1"/>
    <property type="molecule type" value="Genomic_DNA"/>
</dbReference>
<dbReference type="RefSeq" id="WP_010032706.1">
    <property type="nucleotide sequence ID" value="NC_017463.1"/>
</dbReference>
<dbReference type="SMR" id="Q0BKC0"/>
<dbReference type="KEGG" id="fth:FTH_1688"/>
<dbReference type="GO" id="GO:0022625">
    <property type="term" value="C:cytosolic large ribosomal subunit"/>
    <property type="evidence" value="ECO:0007669"/>
    <property type="project" value="TreeGrafter"/>
</dbReference>
<dbReference type="GO" id="GO:0070180">
    <property type="term" value="F:large ribosomal subunit rRNA binding"/>
    <property type="evidence" value="ECO:0007669"/>
    <property type="project" value="UniProtKB-UniRule"/>
</dbReference>
<dbReference type="GO" id="GO:0003735">
    <property type="term" value="F:structural constituent of ribosome"/>
    <property type="evidence" value="ECO:0007669"/>
    <property type="project" value="InterPro"/>
</dbReference>
<dbReference type="GO" id="GO:0006412">
    <property type="term" value="P:translation"/>
    <property type="evidence" value="ECO:0007669"/>
    <property type="project" value="UniProtKB-UniRule"/>
</dbReference>
<dbReference type="CDD" id="cd00349">
    <property type="entry name" value="Ribosomal_L11"/>
    <property type="match status" value="1"/>
</dbReference>
<dbReference type="FunFam" id="1.10.10.250:FF:000001">
    <property type="entry name" value="50S ribosomal protein L11"/>
    <property type="match status" value="1"/>
</dbReference>
<dbReference type="FunFam" id="3.30.1550.10:FF:000001">
    <property type="entry name" value="50S ribosomal protein L11"/>
    <property type="match status" value="1"/>
</dbReference>
<dbReference type="Gene3D" id="1.10.10.250">
    <property type="entry name" value="Ribosomal protein L11, C-terminal domain"/>
    <property type="match status" value="1"/>
</dbReference>
<dbReference type="Gene3D" id="3.30.1550.10">
    <property type="entry name" value="Ribosomal protein L11/L12, N-terminal domain"/>
    <property type="match status" value="1"/>
</dbReference>
<dbReference type="HAMAP" id="MF_00736">
    <property type="entry name" value="Ribosomal_uL11"/>
    <property type="match status" value="1"/>
</dbReference>
<dbReference type="InterPro" id="IPR000911">
    <property type="entry name" value="Ribosomal_uL11"/>
</dbReference>
<dbReference type="InterPro" id="IPR006519">
    <property type="entry name" value="Ribosomal_uL11_bac-typ"/>
</dbReference>
<dbReference type="InterPro" id="IPR020783">
    <property type="entry name" value="Ribosomal_uL11_C"/>
</dbReference>
<dbReference type="InterPro" id="IPR036769">
    <property type="entry name" value="Ribosomal_uL11_C_sf"/>
</dbReference>
<dbReference type="InterPro" id="IPR020785">
    <property type="entry name" value="Ribosomal_uL11_CS"/>
</dbReference>
<dbReference type="InterPro" id="IPR020784">
    <property type="entry name" value="Ribosomal_uL11_N"/>
</dbReference>
<dbReference type="InterPro" id="IPR036796">
    <property type="entry name" value="Ribosomal_uL11_N_sf"/>
</dbReference>
<dbReference type="NCBIfam" id="TIGR01632">
    <property type="entry name" value="L11_bact"/>
    <property type="match status" value="1"/>
</dbReference>
<dbReference type="PANTHER" id="PTHR11661">
    <property type="entry name" value="60S RIBOSOMAL PROTEIN L12"/>
    <property type="match status" value="1"/>
</dbReference>
<dbReference type="PANTHER" id="PTHR11661:SF1">
    <property type="entry name" value="LARGE RIBOSOMAL SUBUNIT PROTEIN UL11M"/>
    <property type="match status" value="1"/>
</dbReference>
<dbReference type="Pfam" id="PF00298">
    <property type="entry name" value="Ribosomal_L11"/>
    <property type="match status" value="1"/>
</dbReference>
<dbReference type="Pfam" id="PF03946">
    <property type="entry name" value="Ribosomal_L11_N"/>
    <property type="match status" value="1"/>
</dbReference>
<dbReference type="SMART" id="SM00649">
    <property type="entry name" value="RL11"/>
    <property type="match status" value="1"/>
</dbReference>
<dbReference type="SUPFAM" id="SSF54747">
    <property type="entry name" value="Ribosomal L11/L12e N-terminal domain"/>
    <property type="match status" value="1"/>
</dbReference>
<dbReference type="SUPFAM" id="SSF46906">
    <property type="entry name" value="Ribosomal protein L11, C-terminal domain"/>
    <property type="match status" value="1"/>
</dbReference>
<dbReference type="PROSITE" id="PS00359">
    <property type="entry name" value="RIBOSOMAL_L11"/>
    <property type="match status" value="1"/>
</dbReference>
<gene>
    <name evidence="1" type="primary">rplK</name>
    <name type="ordered locus">FTH_1688</name>
</gene>
<keyword id="KW-0488">Methylation</keyword>
<keyword id="KW-0687">Ribonucleoprotein</keyword>
<keyword id="KW-0689">Ribosomal protein</keyword>
<keyword id="KW-0694">RNA-binding</keyword>
<keyword id="KW-0699">rRNA-binding</keyword>
<proteinExistence type="inferred from homology"/>
<protein>
    <recommendedName>
        <fullName evidence="1">Large ribosomal subunit protein uL11</fullName>
    </recommendedName>
    <alternativeName>
        <fullName evidence="2">50S ribosomal protein L11</fullName>
    </alternativeName>
</protein>
<name>RL11_FRATO</name>
<evidence type="ECO:0000255" key="1">
    <source>
        <dbReference type="HAMAP-Rule" id="MF_00736"/>
    </source>
</evidence>
<evidence type="ECO:0000305" key="2"/>
<feature type="chain" id="PRO_1000046181" description="Large ribosomal subunit protein uL11">
    <location>
        <begin position="1"/>
        <end position="144"/>
    </location>
</feature>